<reference key="1">
    <citation type="journal article" date="1998" name="J. Mammal.">
        <title>Phylogeny of the dasyurid marsupial genus Antechinus based on cytochrome b, 12S rRNA, and protamine P1 genes.</title>
        <authorList>
            <person name="Armstrong L.A."/>
            <person name="Krajewski C."/>
            <person name="Westerman M."/>
        </authorList>
    </citation>
    <scope>NUCLEOTIDE SEQUENCE [GENOMIC DNA]</scope>
</reference>
<protein>
    <recommendedName>
        <fullName>Cytochrome b</fullName>
    </recommendedName>
    <alternativeName>
        <fullName>Complex III subunit 3</fullName>
    </alternativeName>
    <alternativeName>
        <fullName>Complex III subunit III</fullName>
    </alternativeName>
    <alternativeName>
        <fullName>Cytochrome b-c1 complex subunit 3</fullName>
    </alternativeName>
    <alternativeName>
        <fullName>Ubiquinol-cytochrome-c reductase complex cytochrome b subunit</fullName>
    </alternativeName>
</protein>
<keyword id="KW-0249">Electron transport</keyword>
<keyword id="KW-0349">Heme</keyword>
<keyword id="KW-0408">Iron</keyword>
<keyword id="KW-0472">Membrane</keyword>
<keyword id="KW-0479">Metal-binding</keyword>
<keyword id="KW-0496">Mitochondrion</keyword>
<keyword id="KW-0999">Mitochondrion inner membrane</keyword>
<keyword id="KW-0679">Respiratory chain</keyword>
<keyword id="KW-0812">Transmembrane</keyword>
<keyword id="KW-1133">Transmembrane helix</keyword>
<keyword id="KW-0813">Transport</keyword>
<keyword id="KW-0830">Ubiquinone</keyword>
<dbReference type="EMBL" id="AF038288">
    <property type="protein sequence ID" value="AAC15615.1"/>
    <property type="molecule type" value="Genomic_DNA"/>
</dbReference>
<dbReference type="SMR" id="O63536"/>
<dbReference type="GO" id="GO:0005743">
    <property type="term" value="C:mitochondrial inner membrane"/>
    <property type="evidence" value="ECO:0007669"/>
    <property type="project" value="UniProtKB-SubCell"/>
</dbReference>
<dbReference type="GO" id="GO:0045275">
    <property type="term" value="C:respiratory chain complex III"/>
    <property type="evidence" value="ECO:0007669"/>
    <property type="project" value="InterPro"/>
</dbReference>
<dbReference type="GO" id="GO:0046872">
    <property type="term" value="F:metal ion binding"/>
    <property type="evidence" value="ECO:0007669"/>
    <property type="project" value="UniProtKB-KW"/>
</dbReference>
<dbReference type="GO" id="GO:0008121">
    <property type="term" value="F:ubiquinol-cytochrome-c reductase activity"/>
    <property type="evidence" value="ECO:0007669"/>
    <property type="project" value="InterPro"/>
</dbReference>
<dbReference type="GO" id="GO:0006122">
    <property type="term" value="P:mitochondrial electron transport, ubiquinol to cytochrome c"/>
    <property type="evidence" value="ECO:0007669"/>
    <property type="project" value="TreeGrafter"/>
</dbReference>
<dbReference type="CDD" id="cd00290">
    <property type="entry name" value="cytochrome_b_C"/>
    <property type="match status" value="1"/>
</dbReference>
<dbReference type="CDD" id="cd00284">
    <property type="entry name" value="Cytochrome_b_N"/>
    <property type="match status" value="1"/>
</dbReference>
<dbReference type="FunFam" id="1.20.810.10:FF:000002">
    <property type="entry name" value="Cytochrome b"/>
    <property type="match status" value="1"/>
</dbReference>
<dbReference type="Gene3D" id="1.20.810.10">
    <property type="entry name" value="Cytochrome Bc1 Complex, Chain C"/>
    <property type="match status" value="1"/>
</dbReference>
<dbReference type="InterPro" id="IPR005798">
    <property type="entry name" value="Cyt_b/b6_C"/>
</dbReference>
<dbReference type="InterPro" id="IPR036150">
    <property type="entry name" value="Cyt_b/b6_C_sf"/>
</dbReference>
<dbReference type="InterPro" id="IPR005797">
    <property type="entry name" value="Cyt_b/b6_N"/>
</dbReference>
<dbReference type="InterPro" id="IPR027387">
    <property type="entry name" value="Cytb/b6-like_sf"/>
</dbReference>
<dbReference type="InterPro" id="IPR030689">
    <property type="entry name" value="Cytochrome_b"/>
</dbReference>
<dbReference type="InterPro" id="IPR048260">
    <property type="entry name" value="Cytochrome_b_C_euk/bac"/>
</dbReference>
<dbReference type="InterPro" id="IPR048259">
    <property type="entry name" value="Cytochrome_b_N_euk/bac"/>
</dbReference>
<dbReference type="InterPro" id="IPR016174">
    <property type="entry name" value="Di-haem_cyt_TM"/>
</dbReference>
<dbReference type="PANTHER" id="PTHR19271">
    <property type="entry name" value="CYTOCHROME B"/>
    <property type="match status" value="1"/>
</dbReference>
<dbReference type="PANTHER" id="PTHR19271:SF16">
    <property type="entry name" value="CYTOCHROME B"/>
    <property type="match status" value="1"/>
</dbReference>
<dbReference type="Pfam" id="PF00032">
    <property type="entry name" value="Cytochrom_B_C"/>
    <property type="match status" value="1"/>
</dbReference>
<dbReference type="Pfam" id="PF00033">
    <property type="entry name" value="Cytochrome_B"/>
    <property type="match status" value="1"/>
</dbReference>
<dbReference type="PIRSF" id="PIRSF038885">
    <property type="entry name" value="COB"/>
    <property type="match status" value="1"/>
</dbReference>
<dbReference type="SUPFAM" id="SSF81648">
    <property type="entry name" value="a domain/subunit of cytochrome bc1 complex (Ubiquinol-cytochrome c reductase)"/>
    <property type="match status" value="1"/>
</dbReference>
<dbReference type="SUPFAM" id="SSF81342">
    <property type="entry name" value="Transmembrane di-heme cytochromes"/>
    <property type="match status" value="1"/>
</dbReference>
<dbReference type="PROSITE" id="PS51003">
    <property type="entry name" value="CYTB_CTER"/>
    <property type="match status" value="1"/>
</dbReference>
<dbReference type="PROSITE" id="PS51002">
    <property type="entry name" value="CYTB_NTER"/>
    <property type="match status" value="1"/>
</dbReference>
<gene>
    <name type="primary">MT-CYB</name>
    <name type="synonym">COB</name>
    <name type="synonym">CYTB</name>
    <name type="synonym">MTCYB</name>
</gene>
<accession>O63536</accession>
<organism>
    <name type="scientific">Antechinus godmani</name>
    <name type="common">Atherton antechinus</name>
    <dbReference type="NCBI Taxonomy" id="71385"/>
    <lineage>
        <taxon>Eukaryota</taxon>
        <taxon>Metazoa</taxon>
        <taxon>Chordata</taxon>
        <taxon>Craniata</taxon>
        <taxon>Vertebrata</taxon>
        <taxon>Euteleostomi</taxon>
        <taxon>Mammalia</taxon>
        <taxon>Metatheria</taxon>
        <taxon>Dasyuromorphia</taxon>
        <taxon>Dasyuridae</taxon>
        <taxon>Antechinus</taxon>
    </lineage>
</organism>
<geneLocation type="mitochondrion"/>
<feature type="chain" id="PRO_0000060593" description="Cytochrome b">
    <location>
        <begin position="1"/>
        <end position="381"/>
    </location>
</feature>
<feature type="transmembrane region" description="Helical" evidence="2">
    <location>
        <begin position="33"/>
        <end position="53"/>
    </location>
</feature>
<feature type="transmembrane region" description="Helical" evidence="2">
    <location>
        <begin position="77"/>
        <end position="98"/>
    </location>
</feature>
<feature type="transmembrane region" description="Helical" evidence="2">
    <location>
        <begin position="113"/>
        <end position="133"/>
    </location>
</feature>
<feature type="transmembrane region" description="Helical" evidence="2">
    <location>
        <begin position="178"/>
        <end position="198"/>
    </location>
</feature>
<feature type="transmembrane region" description="Helical" evidence="2">
    <location>
        <begin position="226"/>
        <end position="246"/>
    </location>
</feature>
<feature type="transmembrane region" description="Helical" evidence="2">
    <location>
        <begin position="288"/>
        <end position="308"/>
    </location>
</feature>
<feature type="transmembrane region" description="Helical" evidence="2">
    <location>
        <begin position="320"/>
        <end position="340"/>
    </location>
</feature>
<feature type="transmembrane region" description="Helical" evidence="2">
    <location>
        <begin position="347"/>
        <end position="367"/>
    </location>
</feature>
<feature type="binding site" description="axial binding residue" evidence="2">
    <location>
        <position position="83"/>
    </location>
    <ligand>
        <name>heme b</name>
        <dbReference type="ChEBI" id="CHEBI:60344"/>
        <label>b562</label>
    </ligand>
    <ligandPart>
        <name>Fe</name>
        <dbReference type="ChEBI" id="CHEBI:18248"/>
    </ligandPart>
</feature>
<feature type="binding site" description="axial binding residue" evidence="2">
    <location>
        <position position="97"/>
    </location>
    <ligand>
        <name>heme b</name>
        <dbReference type="ChEBI" id="CHEBI:60344"/>
        <label>b566</label>
    </ligand>
    <ligandPart>
        <name>Fe</name>
        <dbReference type="ChEBI" id="CHEBI:18248"/>
    </ligandPart>
</feature>
<feature type="binding site" description="axial binding residue" evidence="2">
    <location>
        <position position="182"/>
    </location>
    <ligand>
        <name>heme b</name>
        <dbReference type="ChEBI" id="CHEBI:60344"/>
        <label>b562</label>
    </ligand>
    <ligandPart>
        <name>Fe</name>
        <dbReference type="ChEBI" id="CHEBI:18248"/>
    </ligandPart>
</feature>
<feature type="binding site" description="axial binding residue" evidence="2">
    <location>
        <position position="196"/>
    </location>
    <ligand>
        <name>heme b</name>
        <dbReference type="ChEBI" id="CHEBI:60344"/>
        <label>b566</label>
    </ligand>
    <ligandPart>
        <name>Fe</name>
        <dbReference type="ChEBI" id="CHEBI:18248"/>
    </ligandPart>
</feature>
<feature type="binding site" evidence="2">
    <location>
        <position position="201"/>
    </location>
    <ligand>
        <name>a ubiquinone</name>
        <dbReference type="ChEBI" id="CHEBI:16389"/>
    </ligand>
</feature>
<name>CYB_ANTGO</name>
<evidence type="ECO:0000250" key="1"/>
<evidence type="ECO:0000250" key="2">
    <source>
        <dbReference type="UniProtKB" id="P00157"/>
    </source>
</evidence>
<evidence type="ECO:0000255" key="3">
    <source>
        <dbReference type="PROSITE-ProRule" id="PRU00967"/>
    </source>
</evidence>
<evidence type="ECO:0000255" key="4">
    <source>
        <dbReference type="PROSITE-ProRule" id="PRU00968"/>
    </source>
</evidence>
<comment type="function">
    <text evidence="2">Component of the ubiquinol-cytochrome c reductase complex (complex III or cytochrome b-c1 complex) that is part of the mitochondrial respiratory chain. The b-c1 complex mediates electron transfer from ubiquinol to cytochrome c. Contributes to the generation of a proton gradient across the mitochondrial membrane that is then used for ATP synthesis.</text>
</comment>
<comment type="cofactor">
    <cofactor evidence="2">
        <name>heme b</name>
        <dbReference type="ChEBI" id="CHEBI:60344"/>
    </cofactor>
    <text evidence="2">Binds 2 heme b groups non-covalently.</text>
</comment>
<comment type="subunit">
    <text evidence="2">The cytochrome bc1 complex contains 11 subunits: 3 respiratory subunits (MT-CYB, CYC1 and UQCRFS1), 2 core proteins (UQCRC1 and UQCRC2) and 6 low-molecular weight proteins (UQCRH/QCR6, UQCRB/QCR7, UQCRQ/QCR8, UQCR10/QCR9, UQCR11/QCR10 and a cleavage product of UQCRFS1). This cytochrome bc1 complex then forms a dimer.</text>
</comment>
<comment type="subcellular location">
    <subcellularLocation>
        <location evidence="2">Mitochondrion inner membrane</location>
        <topology evidence="2">Multi-pass membrane protein</topology>
    </subcellularLocation>
</comment>
<comment type="miscellaneous">
    <text evidence="1">Heme 1 (or BL or b562) is low-potential and absorbs at about 562 nm, and heme 2 (or BH or b566) is high-potential and absorbs at about 566 nm.</text>
</comment>
<comment type="similarity">
    <text evidence="3 4">Belongs to the cytochrome b family.</text>
</comment>
<comment type="caution">
    <text evidence="2">The full-length protein contains only eight transmembrane helices, not nine as predicted by bioinformatics tools.</text>
</comment>
<proteinExistence type="inferred from homology"/>
<sequence length="381" mass="42804">MINLRKTHPLMKIINHSFIDLPTPSNTSAWWNFGSLLGVCLIIQILTGFFLAMHYTSDTLTAFSSVAHICRDVNYGWLVRNLHANGASMFFMCLFLHVGRGIYYGSYLYKETWNIGVILLLTVMATAFVGYVLPWGQMSFWGATVITNLLSAIPYIGTSLAEWIWGGFAVDKATLTRFFAFHFILPFIITALAIVHLLFLHETGSNNPSGINPDADKIPFHPYYTIKDALGLMLLLLILLLLALFSPDSLGDPDNFSPANPLNTPPHIKPEWYFLFAYAILRSIPNKLGGVLALLASILVLLVIPFLHTANQRSMMFRPVSQTLFWILTANLITLTWIGGQPVEQPFIIIGQLASMLYFLLILVLMPLAGLFENYMLKPKW</sequence>